<gene>
    <name evidence="1" type="primary">lipB</name>
    <name type="ordered locus">lpp1469</name>
</gene>
<evidence type="ECO:0000255" key="1">
    <source>
        <dbReference type="HAMAP-Rule" id="MF_00013"/>
    </source>
</evidence>
<evidence type="ECO:0000255" key="2">
    <source>
        <dbReference type="PROSITE-ProRule" id="PRU01067"/>
    </source>
</evidence>
<sequence>MIIHNLGIKDYTEIWEQMKEFTATRDSNSCDELWLLEHYPVYTQGQAGKPEHVLNPNSIKIVQSDRGGQVTYHGPGQLVAYVLMDIRRRNLGIRTLVVKLEEILISVLEHYRIPANIRSGAPGVYVGEKKVASIGLRVKNGCTYHGIALNVNMDLSPFLGINPCGFAKMEMTQMSHFHPNIQLEDVSQHFVQYFLTQFK</sequence>
<accession>Q5X551</accession>
<dbReference type="EC" id="2.3.1.181" evidence="1"/>
<dbReference type="EMBL" id="CR628336">
    <property type="protein sequence ID" value="CAH12620.1"/>
    <property type="molecule type" value="Genomic_DNA"/>
</dbReference>
<dbReference type="RefSeq" id="WP_011213794.1">
    <property type="nucleotide sequence ID" value="NC_006368.1"/>
</dbReference>
<dbReference type="SMR" id="Q5X551"/>
<dbReference type="KEGG" id="lpp:lpp1469"/>
<dbReference type="LegioList" id="lpp1469"/>
<dbReference type="HOGENOM" id="CLU_035168_3_1_6"/>
<dbReference type="UniPathway" id="UPA00538">
    <property type="reaction ID" value="UER00592"/>
</dbReference>
<dbReference type="GO" id="GO:0005737">
    <property type="term" value="C:cytoplasm"/>
    <property type="evidence" value="ECO:0007669"/>
    <property type="project" value="UniProtKB-SubCell"/>
</dbReference>
<dbReference type="GO" id="GO:0033819">
    <property type="term" value="F:lipoyl(octanoyl) transferase activity"/>
    <property type="evidence" value="ECO:0007669"/>
    <property type="project" value="UniProtKB-EC"/>
</dbReference>
<dbReference type="GO" id="GO:0036211">
    <property type="term" value="P:protein modification process"/>
    <property type="evidence" value="ECO:0007669"/>
    <property type="project" value="InterPro"/>
</dbReference>
<dbReference type="CDD" id="cd16444">
    <property type="entry name" value="LipB"/>
    <property type="match status" value="1"/>
</dbReference>
<dbReference type="FunFam" id="3.30.930.10:FF:000020">
    <property type="entry name" value="Octanoyltransferase"/>
    <property type="match status" value="1"/>
</dbReference>
<dbReference type="Gene3D" id="3.30.930.10">
    <property type="entry name" value="Bira Bifunctional Protein, Domain 2"/>
    <property type="match status" value="1"/>
</dbReference>
<dbReference type="HAMAP" id="MF_00013">
    <property type="entry name" value="LipB"/>
    <property type="match status" value="1"/>
</dbReference>
<dbReference type="InterPro" id="IPR045864">
    <property type="entry name" value="aa-tRNA-synth_II/BPL/LPL"/>
</dbReference>
<dbReference type="InterPro" id="IPR004143">
    <property type="entry name" value="BPL_LPL_catalytic"/>
</dbReference>
<dbReference type="InterPro" id="IPR000544">
    <property type="entry name" value="Octanoyltransferase"/>
</dbReference>
<dbReference type="InterPro" id="IPR020605">
    <property type="entry name" value="Octanoyltransferase_CS"/>
</dbReference>
<dbReference type="NCBIfam" id="TIGR00214">
    <property type="entry name" value="lipB"/>
    <property type="match status" value="1"/>
</dbReference>
<dbReference type="NCBIfam" id="NF010922">
    <property type="entry name" value="PRK14342.1"/>
    <property type="match status" value="1"/>
</dbReference>
<dbReference type="PANTHER" id="PTHR10993:SF7">
    <property type="entry name" value="LIPOYLTRANSFERASE 2, MITOCHONDRIAL-RELATED"/>
    <property type="match status" value="1"/>
</dbReference>
<dbReference type="PANTHER" id="PTHR10993">
    <property type="entry name" value="OCTANOYLTRANSFERASE"/>
    <property type="match status" value="1"/>
</dbReference>
<dbReference type="Pfam" id="PF21948">
    <property type="entry name" value="LplA-B_cat"/>
    <property type="match status" value="1"/>
</dbReference>
<dbReference type="PIRSF" id="PIRSF016262">
    <property type="entry name" value="LPLase"/>
    <property type="match status" value="1"/>
</dbReference>
<dbReference type="SUPFAM" id="SSF55681">
    <property type="entry name" value="Class II aaRS and biotin synthetases"/>
    <property type="match status" value="1"/>
</dbReference>
<dbReference type="PROSITE" id="PS51733">
    <property type="entry name" value="BPL_LPL_CATALYTIC"/>
    <property type="match status" value="1"/>
</dbReference>
<dbReference type="PROSITE" id="PS01313">
    <property type="entry name" value="LIPB"/>
    <property type="match status" value="1"/>
</dbReference>
<keyword id="KW-0012">Acyltransferase</keyword>
<keyword id="KW-0963">Cytoplasm</keyword>
<keyword id="KW-0808">Transferase</keyword>
<comment type="function">
    <text evidence="1">Catalyzes the transfer of endogenously produced octanoic acid from octanoyl-acyl-carrier-protein onto the lipoyl domains of lipoate-dependent enzymes. Lipoyl-ACP can also act as a substrate although octanoyl-ACP is likely to be the physiological substrate.</text>
</comment>
<comment type="catalytic activity">
    <reaction evidence="1">
        <text>octanoyl-[ACP] + L-lysyl-[protein] = N(6)-octanoyl-L-lysyl-[protein] + holo-[ACP] + H(+)</text>
        <dbReference type="Rhea" id="RHEA:17665"/>
        <dbReference type="Rhea" id="RHEA-COMP:9636"/>
        <dbReference type="Rhea" id="RHEA-COMP:9685"/>
        <dbReference type="Rhea" id="RHEA-COMP:9752"/>
        <dbReference type="Rhea" id="RHEA-COMP:9928"/>
        <dbReference type="ChEBI" id="CHEBI:15378"/>
        <dbReference type="ChEBI" id="CHEBI:29969"/>
        <dbReference type="ChEBI" id="CHEBI:64479"/>
        <dbReference type="ChEBI" id="CHEBI:78463"/>
        <dbReference type="ChEBI" id="CHEBI:78809"/>
        <dbReference type="EC" id="2.3.1.181"/>
    </reaction>
</comment>
<comment type="pathway">
    <text evidence="1">Protein modification; protein lipoylation via endogenous pathway; protein N(6)-(lipoyl)lysine from octanoyl-[acyl-carrier-protein]: step 1/2.</text>
</comment>
<comment type="subcellular location">
    <subcellularLocation>
        <location evidence="1">Cytoplasm</location>
    </subcellularLocation>
</comment>
<comment type="miscellaneous">
    <text evidence="1">In the reaction, the free carboxyl group of octanoic acid is attached via an amide linkage to the epsilon-amino group of a specific lysine residue of lipoyl domains of lipoate-dependent enzymes.</text>
</comment>
<comment type="similarity">
    <text evidence="1">Belongs to the LipB family.</text>
</comment>
<protein>
    <recommendedName>
        <fullName evidence="1">Octanoyltransferase</fullName>
        <ecNumber evidence="1">2.3.1.181</ecNumber>
    </recommendedName>
    <alternativeName>
        <fullName evidence="1">Lipoate-protein ligase B</fullName>
    </alternativeName>
    <alternativeName>
        <fullName evidence="1">Lipoyl/octanoyl transferase</fullName>
    </alternativeName>
    <alternativeName>
        <fullName evidence="1">Octanoyl-[acyl-carrier-protein]-protein N-octanoyltransferase</fullName>
    </alternativeName>
</protein>
<feature type="chain" id="PRO_0000242731" description="Octanoyltransferase">
    <location>
        <begin position="1"/>
        <end position="199"/>
    </location>
</feature>
<feature type="domain" description="BPL/LPL catalytic" evidence="2">
    <location>
        <begin position="27"/>
        <end position="199"/>
    </location>
</feature>
<feature type="active site" description="Acyl-thioester intermediate" evidence="1">
    <location>
        <position position="164"/>
    </location>
</feature>
<feature type="binding site" evidence="1">
    <location>
        <begin position="66"/>
        <end position="73"/>
    </location>
    <ligand>
        <name>substrate</name>
    </ligand>
</feature>
<feature type="binding site" evidence="1">
    <location>
        <begin position="133"/>
        <end position="135"/>
    </location>
    <ligand>
        <name>substrate</name>
    </ligand>
</feature>
<feature type="binding site" evidence="1">
    <location>
        <begin position="146"/>
        <end position="148"/>
    </location>
    <ligand>
        <name>substrate</name>
    </ligand>
</feature>
<feature type="site" description="Lowers pKa of active site Cys" evidence="1">
    <location>
        <position position="130"/>
    </location>
</feature>
<proteinExistence type="inferred from homology"/>
<name>LIPB_LEGPA</name>
<organism>
    <name type="scientific">Legionella pneumophila (strain Paris)</name>
    <dbReference type="NCBI Taxonomy" id="297246"/>
    <lineage>
        <taxon>Bacteria</taxon>
        <taxon>Pseudomonadati</taxon>
        <taxon>Pseudomonadota</taxon>
        <taxon>Gammaproteobacteria</taxon>
        <taxon>Legionellales</taxon>
        <taxon>Legionellaceae</taxon>
        <taxon>Legionella</taxon>
    </lineage>
</organism>
<reference key="1">
    <citation type="journal article" date="2004" name="Nat. Genet.">
        <title>Evidence in the Legionella pneumophila genome for exploitation of host cell functions and high genome plasticity.</title>
        <authorList>
            <person name="Cazalet C."/>
            <person name="Rusniok C."/>
            <person name="Brueggemann H."/>
            <person name="Zidane N."/>
            <person name="Magnier A."/>
            <person name="Ma L."/>
            <person name="Tichit M."/>
            <person name="Jarraud S."/>
            <person name="Bouchier C."/>
            <person name="Vandenesch F."/>
            <person name="Kunst F."/>
            <person name="Etienne J."/>
            <person name="Glaser P."/>
            <person name="Buchrieser C."/>
        </authorList>
    </citation>
    <scope>NUCLEOTIDE SEQUENCE [LARGE SCALE GENOMIC DNA]</scope>
    <source>
        <strain>Paris</strain>
    </source>
</reference>